<reference key="1">
    <citation type="journal article" date="2002" name="Nature">
        <title>The genome sequence of Schizosaccharomyces pombe.</title>
        <authorList>
            <person name="Wood V."/>
            <person name="Gwilliam R."/>
            <person name="Rajandream M.A."/>
            <person name="Lyne M.H."/>
            <person name="Lyne R."/>
            <person name="Stewart A."/>
            <person name="Sgouros J.G."/>
            <person name="Peat N."/>
            <person name="Hayles J."/>
            <person name="Baker S.G."/>
            <person name="Basham D."/>
            <person name="Bowman S."/>
            <person name="Brooks K."/>
            <person name="Brown D."/>
            <person name="Brown S."/>
            <person name="Chillingworth T."/>
            <person name="Churcher C.M."/>
            <person name="Collins M."/>
            <person name="Connor R."/>
            <person name="Cronin A."/>
            <person name="Davis P."/>
            <person name="Feltwell T."/>
            <person name="Fraser A."/>
            <person name="Gentles S."/>
            <person name="Goble A."/>
            <person name="Hamlin N."/>
            <person name="Harris D.E."/>
            <person name="Hidalgo J."/>
            <person name="Hodgson G."/>
            <person name="Holroyd S."/>
            <person name="Hornsby T."/>
            <person name="Howarth S."/>
            <person name="Huckle E.J."/>
            <person name="Hunt S."/>
            <person name="Jagels K."/>
            <person name="James K.D."/>
            <person name="Jones L."/>
            <person name="Jones M."/>
            <person name="Leather S."/>
            <person name="McDonald S."/>
            <person name="McLean J."/>
            <person name="Mooney P."/>
            <person name="Moule S."/>
            <person name="Mungall K.L."/>
            <person name="Murphy L.D."/>
            <person name="Niblett D."/>
            <person name="Odell C."/>
            <person name="Oliver K."/>
            <person name="O'Neil S."/>
            <person name="Pearson D."/>
            <person name="Quail M.A."/>
            <person name="Rabbinowitsch E."/>
            <person name="Rutherford K.M."/>
            <person name="Rutter S."/>
            <person name="Saunders D."/>
            <person name="Seeger K."/>
            <person name="Sharp S."/>
            <person name="Skelton J."/>
            <person name="Simmonds M.N."/>
            <person name="Squares R."/>
            <person name="Squares S."/>
            <person name="Stevens K."/>
            <person name="Taylor K."/>
            <person name="Taylor R.G."/>
            <person name="Tivey A."/>
            <person name="Walsh S.V."/>
            <person name="Warren T."/>
            <person name="Whitehead S."/>
            <person name="Woodward J.R."/>
            <person name="Volckaert G."/>
            <person name="Aert R."/>
            <person name="Robben J."/>
            <person name="Grymonprez B."/>
            <person name="Weltjens I."/>
            <person name="Vanstreels E."/>
            <person name="Rieger M."/>
            <person name="Schaefer M."/>
            <person name="Mueller-Auer S."/>
            <person name="Gabel C."/>
            <person name="Fuchs M."/>
            <person name="Duesterhoeft A."/>
            <person name="Fritzc C."/>
            <person name="Holzer E."/>
            <person name="Moestl D."/>
            <person name="Hilbert H."/>
            <person name="Borzym K."/>
            <person name="Langer I."/>
            <person name="Beck A."/>
            <person name="Lehrach H."/>
            <person name="Reinhardt R."/>
            <person name="Pohl T.M."/>
            <person name="Eger P."/>
            <person name="Zimmermann W."/>
            <person name="Wedler H."/>
            <person name="Wambutt R."/>
            <person name="Purnelle B."/>
            <person name="Goffeau A."/>
            <person name="Cadieu E."/>
            <person name="Dreano S."/>
            <person name="Gloux S."/>
            <person name="Lelaure V."/>
            <person name="Mottier S."/>
            <person name="Galibert F."/>
            <person name="Aves S.J."/>
            <person name="Xiang Z."/>
            <person name="Hunt C."/>
            <person name="Moore K."/>
            <person name="Hurst S.M."/>
            <person name="Lucas M."/>
            <person name="Rochet M."/>
            <person name="Gaillardin C."/>
            <person name="Tallada V.A."/>
            <person name="Garzon A."/>
            <person name="Thode G."/>
            <person name="Daga R.R."/>
            <person name="Cruzado L."/>
            <person name="Jimenez J."/>
            <person name="Sanchez M."/>
            <person name="del Rey F."/>
            <person name="Benito J."/>
            <person name="Dominguez A."/>
            <person name="Revuelta J.L."/>
            <person name="Moreno S."/>
            <person name="Armstrong J."/>
            <person name="Forsburg S.L."/>
            <person name="Cerutti L."/>
            <person name="Lowe T."/>
            <person name="McCombie W.R."/>
            <person name="Paulsen I."/>
            <person name="Potashkin J."/>
            <person name="Shpakovski G.V."/>
            <person name="Ussery D."/>
            <person name="Barrell B.G."/>
            <person name="Nurse P."/>
        </authorList>
    </citation>
    <scope>NUCLEOTIDE SEQUENCE [LARGE SCALE GENOMIC DNA]</scope>
    <source>
        <strain>972 / ATCC 24843</strain>
    </source>
</reference>
<reference key="2">
    <citation type="journal article" date="2001" name="J. Biol. Chem.">
        <title>Identification of a novel high affinity copper transport complex in the fission yeast Schizosaccharomyces pombe.</title>
        <authorList>
            <person name="Zhou H."/>
            <person name="Thiele D.J."/>
        </authorList>
    </citation>
    <scope>FUNCTION</scope>
    <scope>INTERACTION WITH CTR4</scope>
    <scope>SUBCELLULAR LOCATION</scope>
    <scope>INDUCTION</scope>
</reference>
<gene>
    <name type="primary">ctr5</name>
    <name type="ORF">SPAC1142.05</name>
</gene>
<dbReference type="EMBL" id="CU329670">
    <property type="protein sequence ID" value="CAB77012.1"/>
    <property type="molecule type" value="Genomic_DNA"/>
</dbReference>
<dbReference type="RefSeq" id="NP_594269.1">
    <property type="nucleotide sequence ID" value="NM_001019692.2"/>
</dbReference>
<dbReference type="SMR" id="Q9P7F9"/>
<dbReference type="BioGRID" id="279389">
    <property type="interactions" value="4"/>
</dbReference>
<dbReference type="FunCoup" id="Q9P7F9">
    <property type="interactions" value="15"/>
</dbReference>
<dbReference type="IntAct" id="Q9P7F9">
    <property type="interactions" value="1"/>
</dbReference>
<dbReference type="STRING" id="284812.Q9P7F9"/>
<dbReference type="TCDB" id="1.A.56.1.5">
    <property type="family name" value="the copper transporter (ctr) family"/>
</dbReference>
<dbReference type="iPTMnet" id="Q9P7F9"/>
<dbReference type="PaxDb" id="4896-SPAC1142.05.1"/>
<dbReference type="EnsemblFungi" id="SPAC1142.05.1">
    <property type="protein sequence ID" value="SPAC1142.05.1:pep"/>
    <property type="gene ID" value="SPAC1142.05"/>
</dbReference>
<dbReference type="GeneID" id="2542949"/>
<dbReference type="KEGG" id="spo:2542949"/>
<dbReference type="PomBase" id="SPAC1142.05">
    <property type="gene designation" value="ctr5"/>
</dbReference>
<dbReference type="VEuPathDB" id="FungiDB:SPAC1142.05"/>
<dbReference type="eggNOG" id="KOG3386">
    <property type="taxonomic scope" value="Eukaryota"/>
</dbReference>
<dbReference type="HOGENOM" id="CLU_079690_0_2_1"/>
<dbReference type="InParanoid" id="Q9P7F9"/>
<dbReference type="OMA" id="ENATVCC"/>
<dbReference type="PhylomeDB" id="Q9P7F9"/>
<dbReference type="PRO" id="PR:Q9P7F9"/>
<dbReference type="Proteomes" id="UP000002485">
    <property type="component" value="Chromosome I"/>
</dbReference>
<dbReference type="GO" id="GO:0000324">
    <property type="term" value="C:fungal-type vacuole"/>
    <property type="evidence" value="ECO:0000314"/>
    <property type="project" value="PomBase"/>
</dbReference>
<dbReference type="GO" id="GO:0005886">
    <property type="term" value="C:plasma membrane"/>
    <property type="evidence" value="ECO:0000314"/>
    <property type="project" value="PomBase"/>
</dbReference>
<dbReference type="GO" id="GO:0005375">
    <property type="term" value="F:copper ion transmembrane transporter activity"/>
    <property type="evidence" value="ECO:0000315"/>
    <property type="project" value="PomBase"/>
</dbReference>
<dbReference type="GO" id="GO:0098705">
    <property type="term" value="P:copper ion import across plasma membrane"/>
    <property type="evidence" value="ECO:0000315"/>
    <property type="project" value="PomBase"/>
</dbReference>
<dbReference type="InterPro" id="IPR007274">
    <property type="entry name" value="Cop_transporter"/>
</dbReference>
<dbReference type="PANTHER" id="PTHR12483:SF73">
    <property type="entry name" value="COPPER TRANSPORT PROTEIN CTR3"/>
    <property type="match status" value="1"/>
</dbReference>
<dbReference type="PANTHER" id="PTHR12483">
    <property type="entry name" value="SOLUTE CARRIER FAMILY 31 COPPER TRANSPORTERS"/>
    <property type="match status" value="1"/>
</dbReference>
<dbReference type="Pfam" id="PF04145">
    <property type="entry name" value="Ctr"/>
    <property type="match status" value="1"/>
</dbReference>
<feature type="chain" id="PRO_0000195049" description="Copper transport protein ctr5">
    <location>
        <begin position="1"/>
        <end position="173"/>
    </location>
</feature>
<feature type="topological domain" description="Extracellular" evidence="1">
    <location>
        <begin position="1"/>
        <end position="54"/>
    </location>
</feature>
<feature type="transmembrane region" description="Helical" evidence="1">
    <location>
        <begin position="55"/>
        <end position="75"/>
    </location>
</feature>
<feature type="topological domain" description="Cytoplasmic" evidence="1">
    <location>
        <begin position="76"/>
        <end position="135"/>
    </location>
</feature>
<feature type="transmembrane region" description="Helical" evidence="1">
    <location>
        <begin position="136"/>
        <end position="156"/>
    </location>
</feature>
<feature type="topological domain" description="Extracellular" evidence="1">
    <location>
        <begin position="157"/>
        <end position="173"/>
    </location>
</feature>
<proteinExistence type="evidence at protein level"/>
<organism>
    <name type="scientific">Schizosaccharomyces pombe (strain 972 / ATCC 24843)</name>
    <name type="common">Fission yeast</name>
    <dbReference type="NCBI Taxonomy" id="284812"/>
    <lineage>
        <taxon>Eukaryota</taxon>
        <taxon>Fungi</taxon>
        <taxon>Dikarya</taxon>
        <taxon>Ascomycota</taxon>
        <taxon>Taphrinomycotina</taxon>
        <taxon>Schizosaccharomycetes</taxon>
        <taxon>Schizosaccharomycetales</taxon>
        <taxon>Schizosaccharomycetaceae</taxon>
        <taxon>Schizosaccharomyces</taxon>
    </lineage>
</organism>
<comment type="function">
    <text evidence="2">Required for high affinity copper (probably reduced Cu I) transport into the cell.</text>
</comment>
<comment type="subunit">
    <text evidence="2">Interacts with ctr4.</text>
</comment>
<comment type="interaction">
    <interactant intactId="EBI-1561942">
        <id>Q9P7F9</id>
    </interactant>
    <interactant intactId="EBI-1561952">
        <id>O94722</id>
        <label>ctr4</label>
    </interactant>
    <organismsDiffer>false</organismsDiffer>
    <experiments>2</experiments>
</comment>
<comment type="subcellular location">
    <subcellularLocation>
        <location evidence="2">Membrane</location>
        <topology evidence="2">Multi-pass membrane protein</topology>
    </subcellularLocation>
</comment>
<comment type="induction">
    <text evidence="2">By copper deprivation, and repressed by copper sufficiency.</text>
</comment>
<comment type="similarity">
    <text evidence="3">Belongs to the copper transporter (Ctr) (TC 1.A.56) family. SLC31A subfamily.</text>
</comment>
<sequence>MSLSKMSMSGMSGMGMGSSSNSSAATCRMSMLWNWYIHDSCFLAKSWHINTGNKFAGSIIGIFFFAVAIEGLSLVQRMFDRWIVAHSNGKTLSGPLRIFFPSSTVHVTVWQQLIRAAMYSSFYLSATILMLIVMSFNGYAILFGFVGAWIGFFLFASDTYGTPSTGTGCCESR</sequence>
<protein>
    <recommendedName>
        <fullName>Copper transport protein ctr5</fullName>
        <shortName>Copper transporter 5</shortName>
    </recommendedName>
</protein>
<accession>Q9P7F9</accession>
<name>CTR5_SCHPO</name>
<evidence type="ECO:0000255" key="1"/>
<evidence type="ECO:0000269" key="2">
    <source>
    </source>
</evidence>
<evidence type="ECO:0000305" key="3"/>
<keyword id="KW-0186">Copper</keyword>
<keyword id="KW-0187">Copper transport</keyword>
<keyword id="KW-0406">Ion transport</keyword>
<keyword id="KW-0472">Membrane</keyword>
<keyword id="KW-1185">Reference proteome</keyword>
<keyword id="KW-0812">Transmembrane</keyword>
<keyword id="KW-1133">Transmembrane helix</keyword>
<keyword id="KW-0813">Transport</keyword>